<keyword id="KW-0007">Acetylation</keyword>
<keyword id="KW-1064">Adaptive immunity</keyword>
<keyword id="KW-0963">Cytoplasm</keyword>
<keyword id="KW-0391">Immunity</keyword>
<keyword id="KW-0399">Innate immunity</keyword>
<keyword id="KW-0597">Phosphoprotein</keyword>
<keyword id="KW-1185">Reference proteome</keyword>
<keyword id="KW-0727">SH2 domain</keyword>
<protein>
    <recommendedName>
        <fullName>SH2 domain-containing protein 1A</fullName>
    </recommendedName>
</protein>
<dbReference type="EMBL" id="BC167036">
    <property type="protein sequence ID" value="AAI67036.1"/>
    <property type="molecule type" value="mRNA"/>
</dbReference>
<dbReference type="EMBL" id="CH473991">
    <property type="protein sequence ID" value="EDM10890.1"/>
    <property type="molecule type" value="Genomic_DNA"/>
</dbReference>
<dbReference type="RefSeq" id="NP_001102783.2">
    <property type="nucleotide sequence ID" value="NM_001109313.3"/>
</dbReference>
<dbReference type="RefSeq" id="NP_001421264.1">
    <property type="nucleotide sequence ID" value="NM_001434335.1"/>
</dbReference>
<dbReference type="RefSeq" id="XP_008771750.1">
    <property type="nucleotide sequence ID" value="XM_008773528.2"/>
</dbReference>
<dbReference type="SMR" id="B2RZ59"/>
<dbReference type="FunCoup" id="B2RZ59">
    <property type="interactions" value="197"/>
</dbReference>
<dbReference type="STRING" id="10116.ENSRNOP00000008444"/>
<dbReference type="iPTMnet" id="B2RZ59"/>
<dbReference type="PhosphoSitePlus" id="B2RZ59"/>
<dbReference type="PaxDb" id="10116-ENSRNOP00000008444"/>
<dbReference type="GeneID" id="501502"/>
<dbReference type="KEGG" id="rno:501502"/>
<dbReference type="UCSC" id="RGD:1562408">
    <property type="organism name" value="rat"/>
</dbReference>
<dbReference type="AGR" id="RGD:1562408"/>
<dbReference type="CTD" id="4068"/>
<dbReference type="RGD" id="1562408">
    <property type="gene designation" value="Sh2d1a"/>
</dbReference>
<dbReference type="eggNOG" id="KOG0565">
    <property type="taxonomic scope" value="Eukaryota"/>
</dbReference>
<dbReference type="HOGENOM" id="CLU_125532_1_0_1"/>
<dbReference type="InParanoid" id="B2RZ59"/>
<dbReference type="OrthoDB" id="10053436at2759"/>
<dbReference type="PhylomeDB" id="B2RZ59"/>
<dbReference type="TreeFam" id="TF343096"/>
<dbReference type="PRO" id="PR:B2RZ59"/>
<dbReference type="Proteomes" id="UP000002494">
    <property type="component" value="Chromosome X"/>
</dbReference>
<dbReference type="Proteomes" id="UP000234681">
    <property type="component" value="Chromosome x"/>
</dbReference>
<dbReference type="Bgee" id="ENSRNOG00000006263">
    <property type="expression patterns" value="Expressed in thymus and 11 other cell types or tissues"/>
</dbReference>
<dbReference type="GO" id="GO:0005737">
    <property type="term" value="C:cytoplasm"/>
    <property type="evidence" value="ECO:0000266"/>
    <property type="project" value="RGD"/>
</dbReference>
<dbReference type="GO" id="GO:0030674">
    <property type="term" value="F:protein-macromolecule adaptor activity"/>
    <property type="evidence" value="ECO:0000266"/>
    <property type="project" value="RGD"/>
</dbReference>
<dbReference type="GO" id="GO:0002250">
    <property type="term" value="P:adaptive immune response"/>
    <property type="evidence" value="ECO:0007669"/>
    <property type="project" value="UniProtKB-KW"/>
</dbReference>
<dbReference type="GO" id="GO:0007267">
    <property type="term" value="P:cell-cell signaling"/>
    <property type="evidence" value="ECO:0007669"/>
    <property type="project" value="InterPro"/>
</dbReference>
<dbReference type="GO" id="GO:0006968">
    <property type="term" value="P:cellular defense response"/>
    <property type="evidence" value="ECO:0007669"/>
    <property type="project" value="InterPro"/>
</dbReference>
<dbReference type="GO" id="GO:0006959">
    <property type="term" value="P:humoral immune response"/>
    <property type="evidence" value="ECO:0000266"/>
    <property type="project" value="RGD"/>
</dbReference>
<dbReference type="GO" id="GO:0030101">
    <property type="term" value="P:natural killer cell activation"/>
    <property type="evidence" value="ECO:0000266"/>
    <property type="project" value="RGD"/>
</dbReference>
<dbReference type="GO" id="GO:0042267">
    <property type="term" value="P:natural killer cell mediated cytotoxicity"/>
    <property type="evidence" value="ECO:0000266"/>
    <property type="project" value="RGD"/>
</dbReference>
<dbReference type="GO" id="GO:0050860">
    <property type="term" value="P:negative regulation of T cell receptor signaling pathway"/>
    <property type="evidence" value="ECO:0000266"/>
    <property type="project" value="RGD"/>
</dbReference>
<dbReference type="GO" id="GO:0045954">
    <property type="term" value="P:positive regulation of natural killer cell mediated cytotoxicity"/>
    <property type="evidence" value="ECO:0000266"/>
    <property type="project" value="RGD"/>
</dbReference>
<dbReference type="GO" id="GO:0050776">
    <property type="term" value="P:regulation of immune response"/>
    <property type="evidence" value="ECO:0000266"/>
    <property type="project" value="RGD"/>
</dbReference>
<dbReference type="CDD" id="cd10400">
    <property type="entry name" value="SH2_SAP1a"/>
    <property type="match status" value="1"/>
</dbReference>
<dbReference type="FunFam" id="3.30.505.10:FF:000062">
    <property type="entry name" value="SH2 domain-containing protein 1A"/>
    <property type="match status" value="1"/>
</dbReference>
<dbReference type="Gene3D" id="3.30.505.10">
    <property type="entry name" value="SH2 domain"/>
    <property type="match status" value="1"/>
</dbReference>
<dbReference type="InterPro" id="IPR000980">
    <property type="entry name" value="SH2"/>
</dbReference>
<dbReference type="InterPro" id="IPR036860">
    <property type="entry name" value="SH2_dom_sf"/>
</dbReference>
<dbReference type="InterPro" id="IPR017289">
    <property type="entry name" value="SH2_prot_1A"/>
</dbReference>
<dbReference type="InterPro" id="IPR035876">
    <property type="entry name" value="SH2D1A_SH2"/>
</dbReference>
<dbReference type="PANTHER" id="PTHR46051:SF1">
    <property type="entry name" value="INOSITOL POLYPHOSPHATE-RELATED PHOSPHATASE DOMAIN-CONTAINING PROTEIN"/>
    <property type="match status" value="1"/>
</dbReference>
<dbReference type="PANTHER" id="PTHR46051">
    <property type="entry name" value="SH2 DOMAIN-CONTAINING PROTEIN"/>
    <property type="match status" value="1"/>
</dbReference>
<dbReference type="Pfam" id="PF00017">
    <property type="entry name" value="SH2"/>
    <property type="match status" value="1"/>
</dbReference>
<dbReference type="PIRSF" id="PIRSF037828">
    <property type="entry name" value="SH2_p1A"/>
    <property type="match status" value="1"/>
</dbReference>
<dbReference type="PRINTS" id="PR00401">
    <property type="entry name" value="SH2DOMAIN"/>
</dbReference>
<dbReference type="SMART" id="SM00252">
    <property type="entry name" value="SH2"/>
    <property type="match status" value="1"/>
</dbReference>
<dbReference type="SUPFAM" id="SSF55550">
    <property type="entry name" value="SH2 domain"/>
    <property type="match status" value="1"/>
</dbReference>
<dbReference type="PROSITE" id="PS50001">
    <property type="entry name" value="SH2"/>
    <property type="match status" value="1"/>
</dbReference>
<evidence type="ECO:0000250" key="1">
    <source>
        <dbReference type="UniProtKB" id="O60880"/>
    </source>
</evidence>
<evidence type="ECO:0000250" key="2">
    <source>
        <dbReference type="UniProtKB" id="O88890"/>
    </source>
</evidence>
<evidence type="ECO:0000255" key="3">
    <source>
        <dbReference type="PROSITE-ProRule" id="PRU00191"/>
    </source>
</evidence>
<evidence type="ECO:0000256" key="4">
    <source>
        <dbReference type="SAM" id="MobiDB-lite"/>
    </source>
</evidence>
<evidence type="ECO:0000269" key="5">
    <source>
    </source>
</evidence>
<evidence type="ECO:0007744" key="6">
    <source>
    </source>
</evidence>
<name>SH21A_RAT</name>
<reference key="1">
    <citation type="submission" date="2005-07" db="EMBL/GenBank/DDBJ databases">
        <authorList>
            <person name="Mural R.J."/>
            <person name="Adams M.D."/>
            <person name="Myers E.W."/>
            <person name="Smith H.O."/>
            <person name="Venter J.C."/>
        </authorList>
    </citation>
    <scope>NUCLEOTIDE SEQUENCE [LARGE SCALE GENOMIC DNA]</scope>
    <source>
        <strain>Brown Norway</strain>
    </source>
</reference>
<reference key="2">
    <citation type="journal article" date="2004" name="Genome Res.">
        <title>The status, quality, and expansion of the NIH full-length cDNA project: the Mammalian Gene Collection (MGC).</title>
        <authorList>
            <consortium name="The MGC Project Team"/>
        </authorList>
    </citation>
    <scope>NUCLEOTIDE SEQUENCE [LARGE SCALE MRNA]</scope>
    <source>
        <tissue>Thymus</tissue>
    </source>
</reference>
<reference key="3">
    <citation type="journal article" date="2005" name="J. Biol. Chem.">
        <title>SLAM-associated protein as a potential negative regulator in Trk signaling.</title>
        <authorList>
            <person name="Lo K.Y."/>
            <person name="Chin W.H."/>
            <person name="Ng Y.P."/>
            <person name="Cheng A.W."/>
            <person name="Cheung Z.H."/>
            <person name="Ip N.Y."/>
        </authorList>
    </citation>
    <scope>FUNCTION IN NTRK2 SIGNALING</scope>
    <scope>INTERACTION WITH NTRK1; NTRK2 AND NTRK3</scope>
</reference>
<reference key="4">
    <citation type="journal article" date="2012" name="Nat. Commun.">
        <title>Quantitative maps of protein phosphorylation sites across 14 different rat organs and tissues.</title>
        <authorList>
            <person name="Lundby A."/>
            <person name="Secher A."/>
            <person name="Lage K."/>
            <person name="Nordsborg N.B."/>
            <person name="Dmytriyev A."/>
            <person name="Lundby C."/>
            <person name="Olsen J.V."/>
        </authorList>
    </citation>
    <scope>PHOSPHORYLATION [LARGE SCALE ANALYSIS] AT SER-119</scope>
    <scope>IDENTIFICATION BY MASS SPECTROMETRY [LARGE SCALE ANALYSIS]</scope>
</reference>
<comment type="function">
    <text evidence="1 2 5">Cytoplasmic adapter regulating receptors of the signaling lymphocytic activation molecule (SLAM) family such as SLAMF1, CD244, LY9, CD84, SLAMF6 and SLAMF7. In SLAM signaling seems to cooperate with SH2D1B/EAT-2. Initially it has been proposed that association with SLAMF1 prevents SLAMF1 binding to inhibitory effectors including INPP5D/SHIP1 and PTPN11/SHP-2. However, by simultaneous interactions, recruits FYN which subsequently phosphorylates and activates SLAMF1. Positively regulates CD244/2B4- and CD84-mediated natural killer (NK) cell functions. Can also promote CD48-, SLAMF6 -, LY9-, and SLAMF7-mediated NK cell activation. In the context of NK cell-mediated cytotoxicity enhances conjugate formation with target cells (By similarity). May also regulate the activity of the neurotrophin receptors NTRK1, NTRK2 and NTRK3 (PubMed:16223723).</text>
</comment>
<comment type="subunit">
    <text evidence="2 5">Interacts with CD84, CD244, LY9, SLAMF1 and FYN (By similarity). Interacts with NTRK1, NTRK2 and NTRK3.</text>
</comment>
<comment type="subcellular location">
    <subcellularLocation>
        <location evidence="2">Cytoplasm</location>
    </subcellularLocation>
</comment>
<organism>
    <name type="scientific">Rattus norvegicus</name>
    <name type="common">Rat</name>
    <dbReference type="NCBI Taxonomy" id="10116"/>
    <lineage>
        <taxon>Eukaryota</taxon>
        <taxon>Metazoa</taxon>
        <taxon>Chordata</taxon>
        <taxon>Craniata</taxon>
        <taxon>Vertebrata</taxon>
        <taxon>Euteleostomi</taxon>
        <taxon>Mammalia</taxon>
        <taxon>Eutheria</taxon>
        <taxon>Euarchontoglires</taxon>
        <taxon>Glires</taxon>
        <taxon>Rodentia</taxon>
        <taxon>Myomorpha</taxon>
        <taxon>Muroidea</taxon>
        <taxon>Muridae</taxon>
        <taxon>Murinae</taxon>
        <taxon>Rattus</taxon>
    </lineage>
</organism>
<feature type="chain" id="PRO_0000356885" description="SH2 domain-containing protein 1A">
    <location>
        <begin position="1"/>
        <end position="126"/>
    </location>
</feature>
<feature type="domain" description="SH2" evidence="3">
    <location>
        <begin position="6"/>
        <end position="102"/>
    </location>
</feature>
<feature type="region of interest" description="Interaction with FYN SH3 domain" evidence="2">
    <location>
        <begin position="67"/>
        <end position="92"/>
    </location>
</feature>
<feature type="region of interest" description="Disordered" evidence="4">
    <location>
        <begin position="100"/>
        <end position="126"/>
    </location>
</feature>
<feature type="compositionally biased region" description="Basic and acidic residues" evidence="4">
    <location>
        <begin position="115"/>
        <end position="126"/>
    </location>
</feature>
<feature type="modified residue" description="N6-acetyllysine" evidence="1">
    <location>
        <position position="89"/>
    </location>
</feature>
<feature type="modified residue" description="Phosphoserine" evidence="6">
    <location>
        <position position="119"/>
    </location>
</feature>
<proteinExistence type="evidence at protein level"/>
<accession>B2RZ59</accession>
<sequence>MDAVTVYHGKISREMGEKLLLATGLDGSYLLRDSESVPGVYCLCVLYQGYIYTYRVSQTETGSWSAETAPGVHKRFFRKVKNLISAFQKPDQGIVTPLQYPVEKSSARSPQAPTGRRDSDICLKAP</sequence>
<gene>
    <name type="primary">Sh2d1a</name>
</gene>